<reference key="1">
    <citation type="journal article" date="2003" name="Proc. Natl. Acad. Sci. U.S.A.">
        <title>The complete genome sequence of Mycobacterium bovis.</title>
        <authorList>
            <person name="Garnier T."/>
            <person name="Eiglmeier K."/>
            <person name="Camus J.-C."/>
            <person name="Medina N."/>
            <person name="Mansoor H."/>
            <person name="Pryor M."/>
            <person name="Duthoy S."/>
            <person name="Grondin S."/>
            <person name="Lacroix C."/>
            <person name="Monsempe C."/>
            <person name="Simon S."/>
            <person name="Harris B."/>
            <person name="Atkin R."/>
            <person name="Doggett J."/>
            <person name="Mayes R."/>
            <person name="Keating L."/>
            <person name="Wheeler P.R."/>
            <person name="Parkhill J."/>
            <person name="Barrell B.G."/>
            <person name="Cole S.T."/>
            <person name="Gordon S.V."/>
            <person name="Hewinson R.G."/>
        </authorList>
    </citation>
    <scope>NUCLEOTIDE SEQUENCE [LARGE SCALE GENOMIC DNA]</scope>
    <source>
        <strain>ATCC BAA-935 / AF2122/97</strain>
    </source>
</reference>
<reference key="2">
    <citation type="journal article" date="2017" name="Genome Announc.">
        <title>Updated reference genome sequence and annotation of Mycobacterium bovis AF2122/97.</title>
        <authorList>
            <person name="Malone K.M."/>
            <person name="Farrell D."/>
            <person name="Stuber T.P."/>
            <person name="Schubert O.T."/>
            <person name="Aebersold R."/>
            <person name="Robbe-Austerman S."/>
            <person name="Gordon S.V."/>
        </authorList>
    </citation>
    <scope>NUCLEOTIDE SEQUENCE [LARGE SCALE GENOMIC DNA]</scope>
    <scope>GENOME REANNOTATION</scope>
    <source>
        <strain>ATCC BAA-935 / AF2122/97</strain>
    </source>
</reference>
<organism>
    <name type="scientific">Mycobacterium bovis (strain ATCC BAA-935 / AF2122/97)</name>
    <dbReference type="NCBI Taxonomy" id="233413"/>
    <lineage>
        <taxon>Bacteria</taxon>
        <taxon>Bacillati</taxon>
        <taxon>Actinomycetota</taxon>
        <taxon>Actinomycetes</taxon>
        <taxon>Mycobacteriales</taxon>
        <taxon>Mycobacteriaceae</taxon>
        <taxon>Mycobacterium</taxon>
        <taxon>Mycobacterium tuberculosis complex</taxon>
    </lineage>
</organism>
<feature type="chain" id="PRO_0000195310" description="Glucose-1-phosphate adenylyltransferase">
    <location>
        <begin position="1"/>
        <end position="404"/>
    </location>
</feature>
<feature type="binding site" evidence="1">
    <location>
        <position position="99"/>
    </location>
    <ligand>
        <name>alpha-D-glucose 1-phosphate</name>
        <dbReference type="ChEBI" id="CHEBI:58601"/>
    </ligand>
</feature>
<feature type="binding site" evidence="1">
    <location>
        <position position="164"/>
    </location>
    <ligand>
        <name>alpha-D-glucose 1-phosphate</name>
        <dbReference type="ChEBI" id="CHEBI:58601"/>
    </ligand>
</feature>
<feature type="binding site" evidence="1">
    <location>
        <begin position="179"/>
        <end position="180"/>
    </location>
    <ligand>
        <name>alpha-D-glucose 1-phosphate</name>
        <dbReference type="ChEBI" id="CHEBI:58601"/>
    </ligand>
</feature>
<feature type="binding site" evidence="1">
    <location>
        <position position="197"/>
    </location>
    <ligand>
        <name>alpha-D-glucose 1-phosphate</name>
        <dbReference type="ChEBI" id="CHEBI:58601"/>
    </ligand>
</feature>
<proteinExistence type="inferred from homology"/>
<keyword id="KW-0067">ATP-binding</keyword>
<keyword id="KW-0119">Carbohydrate metabolism</keyword>
<keyword id="KW-0320">Glycogen biosynthesis</keyword>
<keyword id="KW-0321">Glycogen metabolism</keyword>
<keyword id="KW-0547">Nucleotide-binding</keyword>
<keyword id="KW-0548">Nucleotidyltransferase</keyword>
<keyword id="KW-1185">Reference proteome</keyword>
<keyword id="KW-0808">Transferase</keyword>
<accession>P64242</accession>
<accession>A0A1R3XXP7</accession>
<accession>O05314</accession>
<accession>X2BH06</accession>
<comment type="function">
    <text evidence="1">Involved in the biosynthesis of ADP-glucose, a building block, required in the biosynthesis of maltose-1-phosphate (M1P) and in the elongation reactions to produce linear alpha-1,4-glucans. Catalyzes the reaction between ATP and alpha-D-glucose 1-phosphate (G1P) to produce pyrophosphate and ADP-Glc.</text>
</comment>
<comment type="catalytic activity">
    <reaction evidence="1">
        <text>alpha-D-glucose 1-phosphate + ATP + H(+) = ADP-alpha-D-glucose + diphosphate</text>
        <dbReference type="Rhea" id="RHEA:12120"/>
        <dbReference type="ChEBI" id="CHEBI:15378"/>
        <dbReference type="ChEBI" id="CHEBI:30616"/>
        <dbReference type="ChEBI" id="CHEBI:33019"/>
        <dbReference type="ChEBI" id="CHEBI:57498"/>
        <dbReference type="ChEBI" id="CHEBI:58601"/>
        <dbReference type="EC" id="2.7.7.27"/>
    </reaction>
</comment>
<comment type="pathway">
    <text evidence="2">Capsule biogenesis; capsule polysaccharide biosynthesis.</text>
</comment>
<comment type="pathway">
    <text evidence="1">Glycan biosynthesis; glycogen biosynthesis.</text>
</comment>
<comment type="similarity">
    <text evidence="1">Belongs to the bacterial/plant glucose-1-phosphate adenylyltransferase family.</text>
</comment>
<sequence length="404" mass="43800">MREVPHVLGIVLAGGEGKRLYPLTADRAKPAVPFGGAYRLIDFVLSNLVNARYLRICVLTQYKSHSLDRHISQNWRLSGLAGEYITPVPAQQRLGPRWYTGSADAIYQSLNLIYDEDPDYIVVFGADHVYRMDPEQMVRFHIDSGAGATVAGIRVPRENATAFGCIDADDSGRIRSFVEKPLEPPGTPDDPDTTFVSMGNYIFTTKVLIDAIRADADDDHSDHDMGGDIVPRLVADGMAAVYDFSDNEVPGATDRDRAYWRDVGTLDAFYDAHMDLVSVHPVFNLYNKRWPIRGESENLAPAKFVNGGSAQESVVGAGSIISAASVRNSVLSSNVVVDDGAIVEGSVIMPGTRVGRGAVVRHAILDKNVVVGPGEMVGVDLEKDRERFAISAGGVVAVGKGVWI</sequence>
<protein>
    <recommendedName>
        <fullName evidence="1">Glucose-1-phosphate adenylyltransferase</fullName>
        <ecNumber evidence="1">2.7.7.27</ecNumber>
    </recommendedName>
    <alternativeName>
        <fullName evidence="1">ADP-glucose pyrophosphorylase</fullName>
        <shortName evidence="1">ADPGlc PPase</shortName>
    </alternativeName>
    <alternativeName>
        <fullName evidence="1">ADP-glucose synthase</fullName>
    </alternativeName>
</protein>
<evidence type="ECO:0000255" key="1">
    <source>
        <dbReference type="HAMAP-Rule" id="MF_00624"/>
    </source>
</evidence>
<evidence type="ECO:0000305" key="2"/>
<dbReference type="EC" id="2.7.7.27" evidence="1"/>
<dbReference type="EMBL" id="LT708304">
    <property type="protein sequence ID" value="SIT99846.1"/>
    <property type="molecule type" value="Genomic_DNA"/>
</dbReference>
<dbReference type="RefSeq" id="NP_854899.1">
    <property type="nucleotide sequence ID" value="NC_002945.3"/>
</dbReference>
<dbReference type="RefSeq" id="WP_003406249.1">
    <property type="nucleotide sequence ID" value="NC_002945.4"/>
</dbReference>
<dbReference type="SMR" id="P64242"/>
<dbReference type="GeneID" id="45425183"/>
<dbReference type="KEGG" id="mbo:BQ2027_MB1245"/>
<dbReference type="PATRIC" id="fig|233413.5.peg.1365"/>
<dbReference type="UniPathway" id="UPA00164"/>
<dbReference type="UniPathway" id="UPA00934"/>
<dbReference type="Proteomes" id="UP000001419">
    <property type="component" value="Chromosome"/>
</dbReference>
<dbReference type="GO" id="GO:0005524">
    <property type="term" value="F:ATP binding"/>
    <property type="evidence" value="ECO:0007669"/>
    <property type="project" value="UniProtKB-KW"/>
</dbReference>
<dbReference type="GO" id="GO:0008878">
    <property type="term" value="F:glucose-1-phosphate adenylyltransferase activity"/>
    <property type="evidence" value="ECO:0007669"/>
    <property type="project" value="UniProtKB-UniRule"/>
</dbReference>
<dbReference type="GO" id="GO:0045227">
    <property type="term" value="P:capsule polysaccharide biosynthetic process"/>
    <property type="evidence" value="ECO:0007669"/>
    <property type="project" value="UniProtKB-UniPathway"/>
</dbReference>
<dbReference type="GO" id="GO:0005978">
    <property type="term" value="P:glycogen biosynthetic process"/>
    <property type="evidence" value="ECO:0007669"/>
    <property type="project" value="UniProtKB-UniRule"/>
</dbReference>
<dbReference type="CDD" id="cd02508">
    <property type="entry name" value="ADP_Glucose_PP"/>
    <property type="match status" value="1"/>
</dbReference>
<dbReference type="CDD" id="cd04651">
    <property type="entry name" value="LbH_G1P_AT_C"/>
    <property type="match status" value="1"/>
</dbReference>
<dbReference type="FunFam" id="2.160.10.10:FF:000020">
    <property type="entry name" value="Glucose-1-phosphate adenylyltransferase"/>
    <property type="match status" value="1"/>
</dbReference>
<dbReference type="FunFam" id="3.90.550.10:FF:000014">
    <property type="entry name" value="Glucose-1-phosphate adenylyltransferase"/>
    <property type="match status" value="1"/>
</dbReference>
<dbReference type="Gene3D" id="2.160.10.10">
    <property type="entry name" value="Hexapeptide repeat proteins"/>
    <property type="match status" value="1"/>
</dbReference>
<dbReference type="Gene3D" id="3.90.550.10">
    <property type="entry name" value="Spore Coat Polysaccharide Biosynthesis Protein SpsA, Chain A"/>
    <property type="match status" value="1"/>
</dbReference>
<dbReference type="HAMAP" id="MF_00624">
    <property type="entry name" value="GlgC"/>
    <property type="match status" value="1"/>
</dbReference>
<dbReference type="InterPro" id="IPR011831">
    <property type="entry name" value="ADP-Glc_PPase"/>
</dbReference>
<dbReference type="InterPro" id="IPR005836">
    <property type="entry name" value="ADP_Glu_pyroP_CS"/>
</dbReference>
<dbReference type="InterPro" id="IPR023049">
    <property type="entry name" value="GlgC_bac"/>
</dbReference>
<dbReference type="InterPro" id="IPR056818">
    <property type="entry name" value="GlmU/GlgC-like_hexapep"/>
</dbReference>
<dbReference type="InterPro" id="IPR005835">
    <property type="entry name" value="NTP_transferase_dom"/>
</dbReference>
<dbReference type="InterPro" id="IPR029044">
    <property type="entry name" value="Nucleotide-diphossugar_trans"/>
</dbReference>
<dbReference type="InterPro" id="IPR011004">
    <property type="entry name" value="Trimer_LpxA-like_sf"/>
</dbReference>
<dbReference type="NCBIfam" id="TIGR02091">
    <property type="entry name" value="glgC"/>
    <property type="match status" value="1"/>
</dbReference>
<dbReference type="NCBIfam" id="NF001947">
    <property type="entry name" value="PRK00725.1"/>
    <property type="match status" value="1"/>
</dbReference>
<dbReference type="NCBIfam" id="NF002023">
    <property type="entry name" value="PRK00844.1"/>
    <property type="match status" value="1"/>
</dbReference>
<dbReference type="PANTHER" id="PTHR43523:SF2">
    <property type="entry name" value="GLUCOSE-1-PHOSPHATE ADENYLYLTRANSFERASE"/>
    <property type="match status" value="1"/>
</dbReference>
<dbReference type="PANTHER" id="PTHR43523">
    <property type="entry name" value="GLUCOSE-1-PHOSPHATE ADENYLYLTRANSFERASE-RELATED"/>
    <property type="match status" value="1"/>
</dbReference>
<dbReference type="Pfam" id="PF24894">
    <property type="entry name" value="Hexapep_GlmU"/>
    <property type="match status" value="1"/>
</dbReference>
<dbReference type="Pfam" id="PF00483">
    <property type="entry name" value="NTP_transferase"/>
    <property type="match status" value="1"/>
</dbReference>
<dbReference type="SUPFAM" id="SSF53448">
    <property type="entry name" value="Nucleotide-diphospho-sugar transferases"/>
    <property type="match status" value="1"/>
</dbReference>
<dbReference type="SUPFAM" id="SSF51161">
    <property type="entry name" value="Trimeric LpxA-like enzymes"/>
    <property type="match status" value="1"/>
</dbReference>
<dbReference type="PROSITE" id="PS00808">
    <property type="entry name" value="ADP_GLC_PYROPHOSPH_1"/>
    <property type="match status" value="1"/>
</dbReference>
<dbReference type="PROSITE" id="PS00809">
    <property type="entry name" value="ADP_GLC_PYROPHOSPH_2"/>
    <property type="match status" value="1"/>
</dbReference>
<dbReference type="PROSITE" id="PS00810">
    <property type="entry name" value="ADP_GLC_PYROPHOSPH_3"/>
    <property type="match status" value="1"/>
</dbReference>
<name>GLGC_MYCBO</name>
<gene>
    <name evidence="1" type="primary">glgC</name>
    <name type="ordered locus">BQ2027_MB1245</name>
</gene>